<gene>
    <name type="ordered locus">Ppro_0613</name>
</gene>
<feature type="chain" id="PRO_1000213968" description="UPF0210 protein Ppro_0613">
    <location>
        <begin position="1"/>
        <end position="454"/>
    </location>
</feature>
<accession>A1ALM4</accession>
<organism>
    <name type="scientific">Pelobacter propionicus (strain DSM 2379 / NBRC 103807 / OttBd1)</name>
    <dbReference type="NCBI Taxonomy" id="338966"/>
    <lineage>
        <taxon>Bacteria</taxon>
        <taxon>Pseudomonadati</taxon>
        <taxon>Thermodesulfobacteriota</taxon>
        <taxon>Desulfuromonadia</taxon>
        <taxon>Desulfuromonadales</taxon>
        <taxon>Desulfuromonadaceae</taxon>
        <taxon>Pelobacter</taxon>
    </lineage>
</organism>
<reference key="1">
    <citation type="submission" date="2006-10" db="EMBL/GenBank/DDBJ databases">
        <title>Complete sequence of chromosome of Pelobacter propionicus DSM 2379.</title>
        <authorList>
            <consortium name="US DOE Joint Genome Institute"/>
            <person name="Copeland A."/>
            <person name="Lucas S."/>
            <person name="Lapidus A."/>
            <person name="Barry K."/>
            <person name="Detter J.C."/>
            <person name="Glavina del Rio T."/>
            <person name="Hammon N."/>
            <person name="Israni S."/>
            <person name="Dalin E."/>
            <person name="Tice H."/>
            <person name="Pitluck S."/>
            <person name="Saunders E."/>
            <person name="Brettin T."/>
            <person name="Bruce D."/>
            <person name="Han C."/>
            <person name="Tapia R."/>
            <person name="Schmutz J."/>
            <person name="Larimer F."/>
            <person name="Land M."/>
            <person name="Hauser L."/>
            <person name="Kyrpides N."/>
            <person name="Kim E."/>
            <person name="Lovley D."/>
            <person name="Richardson P."/>
        </authorList>
    </citation>
    <scope>NUCLEOTIDE SEQUENCE [LARGE SCALE GENOMIC DNA]</scope>
    <source>
        <strain>DSM 2379 / NBRC 103807 / OttBd1</strain>
    </source>
</reference>
<comment type="subunit">
    <text evidence="1">Homodimer.</text>
</comment>
<comment type="similarity">
    <text evidence="1">Belongs to the UPF0210 family.</text>
</comment>
<evidence type="ECO:0000255" key="1">
    <source>
        <dbReference type="HAMAP-Rule" id="MF_01221"/>
    </source>
</evidence>
<name>Y613_PELPD</name>
<dbReference type="EMBL" id="CP000482">
    <property type="protein sequence ID" value="ABK98244.1"/>
    <property type="molecule type" value="Genomic_DNA"/>
</dbReference>
<dbReference type="RefSeq" id="WP_011734557.1">
    <property type="nucleotide sequence ID" value="NC_008609.1"/>
</dbReference>
<dbReference type="SMR" id="A1ALM4"/>
<dbReference type="STRING" id="338966.Ppro_0613"/>
<dbReference type="KEGG" id="ppd:Ppro_0613"/>
<dbReference type="eggNOG" id="COG2848">
    <property type="taxonomic scope" value="Bacteria"/>
</dbReference>
<dbReference type="HOGENOM" id="CLU_048704_0_0_7"/>
<dbReference type="OrthoDB" id="9763001at2"/>
<dbReference type="Proteomes" id="UP000006732">
    <property type="component" value="Chromosome"/>
</dbReference>
<dbReference type="CDD" id="cd08025">
    <property type="entry name" value="RNR_PFL_like_DUF711"/>
    <property type="match status" value="1"/>
</dbReference>
<dbReference type="Gene3D" id="3.20.70.20">
    <property type="match status" value="1"/>
</dbReference>
<dbReference type="HAMAP" id="MF_01221">
    <property type="entry name" value="UPF0210"/>
    <property type="match status" value="1"/>
</dbReference>
<dbReference type="InterPro" id="IPR007841">
    <property type="entry name" value="UPF0210"/>
</dbReference>
<dbReference type="NCBIfam" id="NF003700">
    <property type="entry name" value="PRK05313.1"/>
    <property type="match status" value="1"/>
</dbReference>
<dbReference type="PANTHER" id="PTHR37560:SF1">
    <property type="entry name" value="UPF0210 PROTEIN MJ1665"/>
    <property type="match status" value="1"/>
</dbReference>
<dbReference type="PANTHER" id="PTHR37560">
    <property type="entry name" value="UPF0210 PROTEIN SPR0218"/>
    <property type="match status" value="1"/>
</dbReference>
<dbReference type="Pfam" id="PF05167">
    <property type="entry name" value="DUF711"/>
    <property type="match status" value="1"/>
</dbReference>
<dbReference type="SUPFAM" id="SSF51998">
    <property type="entry name" value="PFL-like glycyl radical enzymes"/>
    <property type="match status" value="1"/>
</dbReference>
<protein>
    <recommendedName>
        <fullName evidence="1">UPF0210 protein Ppro_0613</fullName>
    </recommendedName>
</protein>
<sequence>MFIHPEEILETLKMVNNEHLDIRTVTMGISLRGCCHPDMATFNSNVYDRILRCAEKLVRTTEEIQSLYGMPIINRRISVTPIAIVAESCQADDYCSVAETLDRAARETGIDFIGGFSALVQKGMTPGDLKLIESIPRALAITEKVCSSVNLASTKAGINMDAVALMGRIIRETARLTADRGAIGCAKLVVFANAPEDNPFMAGAFHGVGEPDCVINVGVSGPGVVNAAVRGLQGSPTLGDIAECIKKTAFKITRMGEMVGREVARRLDAQFGVLDLSLAPTPAVGDSVAAILEAMGLESCGTHGTTAALALLNDAVKKGGSMASSNVGGLSGAFIPVSEDEGMIRAVKRGSLSLDKLEAMTCVCSVGLDMVAVPGDTPAATLSAIIADEMAIGMINKKTTAVRIIPAPGTVVGDVVEFGGLLGSAPVMAVHNFSAETFIGRGGRIPAPIQALTN</sequence>
<proteinExistence type="inferred from homology"/>
<keyword id="KW-1185">Reference proteome</keyword>